<accession>Q9P6M1</accession>
<organism>
    <name type="scientific">Schizosaccharomyces pombe (strain 972 / ATCC 24843)</name>
    <name type="common">Fission yeast</name>
    <dbReference type="NCBI Taxonomy" id="284812"/>
    <lineage>
        <taxon>Eukaryota</taxon>
        <taxon>Fungi</taxon>
        <taxon>Dikarya</taxon>
        <taxon>Ascomycota</taxon>
        <taxon>Taphrinomycotina</taxon>
        <taxon>Schizosaccharomycetes</taxon>
        <taxon>Schizosaccharomycetales</taxon>
        <taxon>Schizosaccharomycetaceae</taxon>
        <taxon>Schizosaccharomyces</taxon>
    </lineage>
</organism>
<proteinExistence type="evidence at protein level"/>
<feature type="chain" id="PRO_0000185986" description="Glutathione S-transferase 3">
    <location>
        <begin position="1"/>
        <end position="242"/>
    </location>
</feature>
<feature type="domain" description="GST N-terminal">
    <location>
        <begin position="1"/>
        <end position="79"/>
    </location>
</feature>
<feature type="domain" description="GST C-terminal">
    <location>
        <begin position="85"/>
        <end position="234"/>
    </location>
</feature>
<feature type="modified residue" description="Phosphoserine" evidence="3">
    <location>
        <position position="228"/>
    </location>
</feature>
<feature type="modified residue" description="Phosphothreonine" evidence="3">
    <location>
        <position position="232"/>
    </location>
</feature>
<name>GST3_SCHPO</name>
<comment type="function">
    <text evidence="1">May have a role in the detoxification of various heavy metals.</text>
</comment>
<comment type="catalytic activity">
    <reaction>
        <text>RX + glutathione = an S-substituted glutathione + a halide anion + H(+)</text>
        <dbReference type="Rhea" id="RHEA:16437"/>
        <dbReference type="ChEBI" id="CHEBI:15378"/>
        <dbReference type="ChEBI" id="CHEBI:16042"/>
        <dbReference type="ChEBI" id="CHEBI:17792"/>
        <dbReference type="ChEBI" id="CHEBI:57925"/>
        <dbReference type="ChEBI" id="CHEBI:90779"/>
        <dbReference type="EC" id="2.5.1.18"/>
    </reaction>
</comment>
<comment type="subunit">
    <text evidence="2">Interacts with sad1.</text>
</comment>
<comment type="subcellular location">
    <subcellularLocation>
        <location evidence="2">Cytoplasm</location>
    </subcellularLocation>
</comment>
<comment type="induction">
    <text evidence="1">By heavy metals such as cadmium and mercury.</text>
</comment>
<comment type="similarity">
    <text evidence="4">Belongs to the GST superfamily.</text>
</comment>
<keyword id="KW-0963">Cytoplasm</keyword>
<keyword id="KW-0597">Phosphoprotein</keyword>
<keyword id="KW-1185">Reference proteome</keyword>
<keyword id="KW-0808">Transferase</keyword>
<sequence>MIVLHHLKNSRSTRIVWMLEELKVPYEIKVYDRVDGRAPPAYTKLSPLGKSPIVVDDGVTYIESAAILEHLVRKYGPSFKPSEEDVAELEKYELWMHFSEASLMPFIWASHVLDLSVNMTPIFFRYIVRQFVNGIKSKYLSKETFLNLDYIDNHLASNEYFAGEQFTAADPQMCFPIFAAQRDYLSQKPYKNIKRWMRVVSDRPACRIAAEKVEDNTLTLFSDVERYSHPPTPPPEQVRSDE</sequence>
<evidence type="ECO:0000269" key="1">
    <source>
    </source>
</evidence>
<evidence type="ECO:0000269" key="2">
    <source>
    </source>
</evidence>
<evidence type="ECO:0000269" key="3">
    <source>
    </source>
</evidence>
<evidence type="ECO:0000305" key="4"/>
<reference key="1">
    <citation type="journal article" date="2002" name="Biochim. Biophys. Acta">
        <title>Characterization, expression and regulation of a third gene encoding glutathione S-transferase from the fission yeast.</title>
        <authorList>
            <person name="Shin Y.H."/>
            <person name="Park E.-H."/>
            <person name="Fuchs J.A."/>
            <person name="Lim C.-J."/>
        </authorList>
    </citation>
    <scope>NUCLEOTIDE SEQUENCE [GENOMIC DNA]</scope>
    <scope>FUNCTION</scope>
    <scope>INDUCTION</scope>
</reference>
<reference key="2">
    <citation type="journal article" date="2002" name="Nature">
        <title>The genome sequence of Schizosaccharomyces pombe.</title>
        <authorList>
            <person name="Wood V."/>
            <person name="Gwilliam R."/>
            <person name="Rajandream M.A."/>
            <person name="Lyne M.H."/>
            <person name="Lyne R."/>
            <person name="Stewart A."/>
            <person name="Sgouros J.G."/>
            <person name="Peat N."/>
            <person name="Hayles J."/>
            <person name="Baker S.G."/>
            <person name="Basham D."/>
            <person name="Bowman S."/>
            <person name="Brooks K."/>
            <person name="Brown D."/>
            <person name="Brown S."/>
            <person name="Chillingworth T."/>
            <person name="Churcher C.M."/>
            <person name="Collins M."/>
            <person name="Connor R."/>
            <person name="Cronin A."/>
            <person name="Davis P."/>
            <person name="Feltwell T."/>
            <person name="Fraser A."/>
            <person name="Gentles S."/>
            <person name="Goble A."/>
            <person name="Hamlin N."/>
            <person name="Harris D.E."/>
            <person name="Hidalgo J."/>
            <person name="Hodgson G."/>
            <person name="Holroyd S."/>
            <person name="Hornsby T."/>
            <person name="Howarth S."/>
            <person name="Huckle E.J."/>
            <person name="Hunt S."/>
            <person name="Jagels K."/>
            <person name="James K.D."/>
            <person name="Jones L."/>
            <person name="Jones M."/>
            <person name="Leather S."/>
            <person name="McDonald S."/>
            <person name="McLean J."/>
            <person name="Mooney P."/>
            <person name="Moule S."/>
            <person name="Mungall K.L."/>
            <person name="Murphy L.D."/>
            <person name="Niblett D."/>
            <person name="Odell C."/>
            <person name="Oliver K."/>
            <person name="O'Neil S."/>
            <person name="Pearson D."/>
            <person name="Quail M.A."/>
            <person name="Rabbinowitsch E."/>
            <person name="Rutherford K.M."/>
            <person name="Rutter S."/>
            <person name="Saunders D."/>
            <person name="Seeger K."/>
            <person name="Sharp S."/>
            <person name="Skelton J."/>
            <person name="Simmonds M.N."/>
            <person name="Squares R."/>
            <person name="Squares S."/>
            <person name="Stevens K."/>
            <person name="Taylor K."/>
            <person name="Taylor R.G."/>
            <person name="Tivey A."/>
            <person name="Walsh S.V."/>
            <person name="Warren T."/>
            <person name="Whitehead S."/>
            <person name="Woodward J.R."/>
            <person name="Volckaert G."/>
            <person name="Aert R."/>
            <person name="Robben J."/>
            <person name="Grymonprez B."/>
            <person name="Weltjens I."/>
            <person name="Vanstreels E."/>
            <person name="Rieger M."/>
            <person name="Schaefer M."/>
            <person name="Mueller-Auer S."/>
            <person name="Gabel C."/>
            <person name="Fuchs M."/>
            <person name="Duesterhoeft A."/>
            <person name="Fritzc C."/>
            <person name="Holzer E."/>
            <person name="Moestl D."/>
            <person name="Hilbert H."/>
            <person name="Borzym K."/>
            <person name="Langer I."/>
            <person name="Beck A."/>
            <person name="Lehrach H."/>
            <person name="Reinhardt R."/>
            <person name="Pohl T.M."/>
            <person name="Eger P."/>
            <person name="Zimmermann W."/>
            <person name="Wedler H."/>
            <person name="Wambutt R."/>
            <person name="Purnelle B."/>
            <person name="Goffeau A."/>
            <person name="Cadieu E."/>
            <person name="Dreano S."/>
            <person name="Gloux S."/>
            <person name="Lelaure V."/>
            <person name="Mottier S."/>
            <person name="Galibert F."/>
            <person name="Aves S.J."/>
            <person name="Xiang Z."/>
            <person name="Hunt C."/>
            <person name="Moore K."/>
            <person name="Hurst S.M."/>
            <person name="Lucas M."/>
            <person name="Rochet M."/>
            <person name="Gaillardin C."/>
            <person name="Tallada V.A."/>
            <person name="Garzon A."/>
            <person name="Thode G."/>
            <person name="Daga R.R."/>
            <person name="Cruzado L."/>
            <person name="Jimenez J."/>
            <person name="Sanchez M."/>
            <person name="del Rey F."/>
            <person name="Benito J."/>
            <person name="Dominguez A."/>
            <person name="Revuelta J.L."/>
            <person name="Moreno S."/>
            <person name="Armstrong J."/>
            <person name="Forsburg S.L."/>
            <person name="Cerutti L."/>
            <person name="Lowe T."/>
            <person name="McCombie W.R."/>
            <person name="Paulsen I."/>
            <person name="Potashkin J."/>
            <person name="Shpakovski G.V."/>
            <person name="Ussery D."/>
            <person name="Barrell B.G."/>
            <person name="Nurse P."/>
        </authorList>
    </citation>
    <scope>NUCLEOTIDE SEQUENCE [LARGE SCALE GENOMIC DNA]</scope>
    <source>
        <strain>972 / ATCC 24843</strain>
    </source>
</reference>
<reference key="3">
    <citation type="journal article" date="2011" name="Science">
        <title>Comparative functional genomics of the fission yeasts.</title>
        <authorList>
            <person name="Rhind N."/>
            <person name="Chen Z."/>
            <person name="Yassour M."/>
            <person name="Thompson D.A."/>
            <person name="Haas B.J."/>
            <person name="Habib N."/>
            <person name="Wapinski I."/>
            <person name="Roy S."/>
            <person name="Lin M.F."/>
            <person name="Heiman D.I."/>
            <person name="Young S.K."/>
            <person name="Furuya K."/>
            <person name="Guo Y."/>
            <person name="Pidoux A."/>
            <person name="Chen H.M."/>
            <person name="Robbertse B."/>
            <person name="Goldberg J.M."/>
            <person name="Aoki K."/>
            <person name="Bayne E.H."/>
            <person name="Berlin A.M."/>
            <person name="Desjardins C.A."/>
            <person name="Dobbs E."/>
            <person name="Dukaj L."/>
            <person name="Fan L."/>
            <person name="FitzGerald M.G."/>
            <person name="French C."/>
            <person name="Gujja S."/>
            <person name="Hansen K."/>
            <person name="Keifenheim D."/>
            <person name="Levin J.Z."/>
            <person name="Mosher R.A."/>
            <person name="Mueller C.A."/>
            <person name="Pfiffner J."/>
            <person name="Priest M."/>
            <person name="Russ C."/>
            <person name="Smialowska A."/>
            <person name="Swoboda P."/>
            <person name="Sykes S.M."/>
            <person name="Vaughn M."/>
            <person name="Vengrova S."/>
            <person name="Yoder R."/>
            <person name="Zeng Q."/>
            <person name="Allshire R."/>
            <person name="Baulcombe D."/>
            <person name="Birren B.W."/>
            <person name="Brown W."/>
            <person name="Ekwall K."/>
            <person name="Kellis M."/>
            <person name="Leatherwood J."/>
            <person name="Levin H."/>
            <person name="Margalit H."/>
            <person name="Martienssen R."/>
            <person name="Nieduszynski C.A."/>
            <person name="Spatafora J.W."/>
            <person name="Friedman N."/>
            <person name="Dalgaard J.Z."/>
            <person name="Baumann P."/>
            <person name="Niki H."/>
            <person name="Regev A."/>
            <person name="Nusbaum C."/>
        </authorList>
    </citation>
    <scope>REVISION OF GENE MODEL</scope>
</reference>
<reference key="4">
    <citation type="journal article" date="2004" name="Mol. Genet. Genomics">
        <title>Two-hybrid search for proteins that interact with Sad1 and Kms1, two membrane-bound components of the spindle pole body in fission yeast.</title>
        <authorList>
            <person name="Miki F."/>
            <person name="Kurabayashi A."/>
            <person name="Tange Y."/>
            <person name="Okazaki K."/>
            <person name="Shimanuki M."/>
            <person name="Niwa O."/>
        </authorList>
    </citation>
    <scope>INTERACTION WITH SAD1</scope>
    <scope>SUBCELLULAR LOCATION</scope>
</reference>
<reference key="5">
    <citation type="journal article" date="2008" name="J. Proteome Res.">
        <title>Phosphoproteome analysis of fission yeast.</title>
        <authorList>
            <person name="Wilson-Grady J.T."/>
            <person name="Villen J."/>
            <person name="Gygi S.P."/>
        </authorList>
    </citation>
    <scope>PHOSPHORYLATION [LARGE SCALE ANALYSIS] AT SER-228 AND THR-232</scope>
    <scope>IDENTIFICATION BY MASS SPECTROMETRY</scope>
</reference>
<reference key="6">
    <citation type="journal article" date="2011" name="Genetics">
        <title>Augmented annotation of the Schizosaccharomyces pombe genome reveals additional genes required for growth and viability.</title>
        <authorList>
            <person name="Bitton D.A."/>
            <person name="Wood V."/>
            <person name="Scutt P.J."/>
            <person name="Grallert A."/>
            <person name="Yates T."/>
            <person name="Smith D.L."/>
            <person name="Hagan I.M."/>
            <person name="Miller C.J."/>
        </authorList>
    </citation>
    <scope>REVISION OF GENE MODEL</scope>
    <scope>IDENTIFICATION BY MASS SPECTROMETRY</scope>
</reference>
<protein>
    <recommendedName>
        <fullName>Glutathione S-transferase 3</fullName>
        <ecNumber>2.5.1.18</ecNumber>
    </recommendedName>
    <alternativeName>
        <fullName>GST-III</fullName>
    </alternativeName>
</protein>
<dbReference type="EC" id="2.5.1.18"/>
<dbReference type="EMBL" id="AY034792">
    <property type="protein sequence ID" value="AAK58430.1"/>
    <property type="molecule type" value="Genomic_DNA"/>
</dbReference>
<dbReference type="EMBL" id="CU329670">
    <property type="protein sequence ID" value="CAB90771.3"/>
    <property type="molecule type" value="Genomic_DNA"/>
</dbReference>
<dbReference type="RefSeq" id="NP_594063.3">
    <property type="nucleotide sequence ID" value="NM_001019487.3"/>
</dbReference>
<dbReference type="SMR" id="Q9P6M1"/>
<dbReference type="BioGRID" id="279899">
    <property type="interactions" value="7"/>
</dbReference>
<dbReference type="FunCoup" id="Q9P6M1">
    <property type="interactions" value="433"/>
</dbReference>
<dbReference type="IntAct" id="Q9P6M1">
    <property type="interactions" value="2"/>
</dbReference>
<dbReference type="STRING" id="284812.Q9P6M1"/>
<dbReference type="iPTMnet" id="Q9P6M1"/>
<dbReference type="PaxDb" id="4896-SPAC688.04c.1"/>
<dbReference type="EnsemblFungi" id="SPAC688.04c.1">
    <property type="protein sequence ID" value="SPAC688.04c.1:pep"/>
    <property type="gene ID" value="SPAC688.04c"/>
</dbReference>
<dbReference type="GeneID" id="2543479"/>
<dbReference type="KEGG" id="spo:2543479"/>
<dbReference type="PomBase" id="SPAC688.04c">
    <property type="gene designation" value="gst3"/>
</dbReference>
<dbReference type="VEuPathDB" id="FungiDB:SPAC688.04c"/>
<dbReference type="eggNOG" id="KOG0867">
    <property type="taxonomic scope" value="Eukaryota"/>
</dbReference>
<dbReference type="HOGENOM" id="CLU_011226_15_0_1"/>
<dbReference type="InParanoid" id="Q9P6M1"/>
<dbReference type="OMA" id="WIHFAES"/>
<dbReference type="PRO" id="PR:Q9P6M1"/>
<dbReference type="Proteomes" id="UP000002485">
    <property type="component" value="Chromosome I"/>
</dbReference>
<dbReference type="GO" id="GO:0005737">
    <property type="term" value="C:cytoplasm"/>
    <property type="evidence" value="ECO:0000314"/>
    <property type="project" value="PomBase"/>
</dbReference>
<dbReference type="GO" id="GO:0005783">
    <property type="term" value="C:endoplasmic reticulum"/>
    <property type="evidence" value="ECO:0007005"/>
    <property type="project" value="PomBase"/>
</dbReference>
<dbReference type="GO" id="GO:0043295">
    <property type="term" value="F:glutathione binding"/>
    <property type="evidence" value="ECO:0000318"/>
    <property type="project" value="GO_Central"/>
</dbReference>
<dbReference type="GO" id="GO:0004602">
    <property type="term" value="F:glutathione peroxidase activity"/>
    <property type="evidence" value="ECO:0000315"/>
    <property type="project" value="PomBase"/>
</dbReference>
<dbReference type="GO" id="GO:0004364">
    <property type="term" value="F:glutathione transferase activity"/>
    <property type="evidence" value="ECO:0000314"/>
    <property type="project" value="PomBase"/>
</dbReference>
<dbReference type="GO" id="GO:0006749">
    <property type="term" value="P:glutathione metabolic process"/>
    <property type="evidence" value="ECO:0000318"/>
    <property type="project" value="GO_Central"/>
</dbReference>
<dbReference type="GO" id="GO:0019430">
    <property type="term" value="P:removal of superoxide radicals"/>
    <property type="evidence" value="ECO:0000303"/>
    <property type="project" value="PomBase"/>
</dbReference>
<dbReference type="CDD" id="cd03046">
    <property type="entry name" value="GST_N_GTT1_like"/>
    <property type="match status" value="1"/>
</dbReference>
<dbReference type="FunFam" id="3.40.30.10:FF:000156">
    <property type="entry name" value="Glutathione S-transferase 1"/>
    <property type="match status" value="1"/>
</dbReference>
<dbReference type="Gene3D" id="1.20.1050.10">
    <property type="match status" value="1"/>
</dbReference>
<dbReference type="Gene3D" id="3.40.30.10">
    <property type="entry name" value="Glutaredoxin"/>
    <property type="match status" value="1"/>
</dbReference>
<dbReference type="InterPro" id="IPR010987">
    <property type="entry name" value="Glutathione-S-Trfase_C-like"/>
</dbReference>
<dbReference type="InterPro" id="IPR036282">
    <property type="entry name" value="Glutathione-S-Trfase_C_sf"/>
</dbReference>
<dbReference type="InterPro" id="IPR040079">
    <property type="entry name" value="Glutathione_S-Trfase"/>
</dbReference>
<dbReference type="InterPro" id="IPR004045">
    <property type="entry name" value="Glutathione_S-Trfase_N"/>
</dbReference>
<dbReference type="InterPro" id="IPR004046">
    <property type="entry name" value="GST_C"/>
</dbReference>
<dbReference type="InterPro" id="IPR036249">
    <property type="entry name" value="Thioredoxin-like_sf"/>
</dbReference>
<dbReference type="PANTHER" id="PTHR44051:SF9">
    <property type="entry name" value="GLUTATHIONE S-TRANSFERASE 1"/>
    <property type="match status" value="1"/>
</dbReference>
<dbReference type="PANTHER" id="PTHR44051">
    <property type="entry name" value="GLUTATHIONE S-TRANSFERASE-RELATED"/>
    <property type="match status" value="1"/>
</dbReference>
<dbReference type="Pfam" id="PF00043">
    <property type="entry name" value="GST_C"/>
    <property type="match status" value="1"/>
</dbReference>
<dbReference type="Pfam" id="PF02798">
    <property type="entry name" value="GST_N"/>
    <property type="match status" value="1"/>
</dbReference>
<dbReference type="SFLD" id="SFLDS00019">
    <property type="entry name" value="Glutathione_Transferase_(cytos"/>
    <property type="match status" value="1"/>
</dbReference>
<dbReference type="SFLD" id="SFLDG01150">
    <property type="entry name" value="Main.1:_Beta-like"/>
    <property type="match status" value="1"/>
</dbReference>
<dbReference type="SUPFAM" id="SSF47616">
    <property type="entry name" value="GST C-terminal domain-like"/>
    <property type="match status" value="1"/>
</dbReference>
<dbReference type="SUPFAM" id="SSF52833">
    <property type="entry name" value="Thioredoxin-like"/>
    <property type="match status" value="1"/>
</dbReference>
<dbReference type="PROSITE" id="PS50405">
    <property type="entry name" value="GST_CTER"/>
    <property type="match status" value="1"/>
</dbReference>
<dbReference type="PROSITE" id="PS50404">
    <property type="entry name" value="GST_NTER"/>
    <property type="match status" value="1"/>
</dbReference>
<gene>
    <name type="primary">gst3</name>
    <name type="ORF">SPAC688.04c</name>
</gene>